<keyword id="KW-0223">Dioxygenase</keyword>
<keyword id="KW-0325">Glycoprotein</keyword>
<keyword id="KW-0408">Iron</keyword>
<keyword id="KW-0472">Membrane</keyword>
<keyword id="KW-0479">Metal-binding</keyword>
<keyword id="KW-0560">Oxidoreductase</keyword>
<keyword id="KW-1185">Reference proteome</keyword>
<keyword id="KW-0735">Signal-anchor</keyword>
<keyword id="KW-0812">Transmembrane</keyword>
<keyword id="KW-1133">Transmembrane helix</keyword>
<reference key="1">
    <citation type="journal article" date="2004" name="Genome Res.">
        <title>The status, quality, and expansion of the NIH full-length cDNA project: the Mammalian Gene Collection (MGC).</title>
        <authorList>
            <consortium name="The MGC Project Team"/>
        </authorList>
    </citation>
    <scope>NUCLEOTIDE SEQUENCE [LARGE SCALE MRNA]</scope>
    <source>
        <tissue>Olfactory epithelium</tissue>
    </source>
</reference>
<reference key="2">
    <citation type="journal article" date="2005" name="Science">
        <title>The transcriptional landscape of the mammalian genome.</title>
        <authorList>
            <person name="Carninci P."/>
            <person name="Kasukawa T."/>
            <person name="Katayama S."/>
            <person name="Gough J."/>
            <person name="Frith M.C."/>
            <person name="Maeda N."/>
            <person name="Oyama R."/>
            <person name="Ravasi T."/>
            <person name="Lenhard B."/>
            <person name="Wells C."/>
            <person name="Kodzius R."/>
            <person name="Shimokawa K."/>
            <person name="Bajic V.B."/>
            <person name="Brenner S.E."/>
            <person name="Batalov S."/>
            <person name="Forrest A.R."/>
            <person name="Zavolan M."/>
            <person name="Davis M.J."/>
            <person name="Wilming L.G."/>
            <person name="Aidinis V."/>
            <person name="Allen J.E."/>
            <person name="Ambesi-Impiombato A."/>
            <person name="Apweiler R."/>
            <person name="Aturaliya R.N."/>
            <person name="Bailey T.L."/>
            <person name="Bansal M."/>
            <person name="Baxter L."/>
            <person name="Beisel K.W."/>
            <person name="Bersano T."/>
            <person name="Bono H."/>
            <person name="Chalk A.M."/>
            <person name="Chiu K.P."/>
            <person name="Choudhary V."/>
            <person name="Christoffels A."/>
            <person name="Clutterbuck D.R."/>
            <person name="Crowe M.L."/>
            <person name="Dalla E."/>
            <person name="Dalrymple B.P."/>
            <person name="de Bono B."/>
            <person name="Della Gatta G."/>
            <person name="di Bernardo D."/>
            <person name="Down T."/>
            <person name="Engstrom P."/>
            <person name="Fagiolini M."/>
            <person name="Faulkner G."/>
            <person name="Fletcher C.F."/>
            <person name="Fukushima T."/>
            <person name="Furuno M."/>
            <person name="Futaki S."/>
            <person name="Gariboldi M."/>
            <person name="Georgii-Hemming P."/>
            <person name="Gingeras T.R."/>
            <person name="Gojobori T."/>
            <person name="Green R.E."/>
            <person name="Gustincich S."/>
            <person name="Harbers M."/>
            <person name="Hayashi Y."/>
            <person name="Hensch T.K."/>
            <person name="Hirokawa N."/>
            <person name="Hill D."/>
            <person name="Huminiecki L."/>
            <person name="Iacono M."/>
            <person name="Ikeo K."/>
            <person name="Iwama A."/>
            <person name="Ishikawa T."/>
            <person name="Jakt M."/>
            <person name="Kanapin A."/>
            <person name="Katoh M."/>
            <person name="Kawasawa Y."/>
            <person name="Kelso J."/>
            <person name="Kitamura H."/>
            <person name="Kitano H."/>
            <person name="Kollias G."/>
            <person name="Krishnan S.P."/>
            <person name="Kruger A."/>
            <person name="Kummerfeld S.K."/>
            <person name="Kurochkin I.V."/>
            <person name="Lareau L.F."/>
            <person name="Lazarevic D."/>
            <person name="Lipovich L."/>
            <person name="Liu J."/>
            <person name="Liuni S."/>
            <person name="McWilliam S."/>
            <person name="Madan Babu M."/>
            <person name="Madera M."/>
            <person name="Marchionni L."/>
            <person name="Matsuda H."/>
            <person name="Matsuzawa S."/>
            <person name="Miki H."/>
            <person name="Mignone F."/>
            <person name="Miyake S."/>
            <person name="Morris K."/>
            <person name="Mottagui-Tabar S."/>
            <person name="Mulder N."/>
            <person name="Nakano N."/>
            <person name="Nakauchi H."/>
            <person name="Ng P."/>
            <person name="Nilsson R."/>
            <person name="Nishiguchi S."/>
            <person name="Nishikawa S."/>
            <person name="Nori F."/>
            <person name="Ohara O."/>
            <person name="Okazaki Y."/>
            <person name="Orlando V."/>
            <person name="Pang K.C."/>
            <person name="Pavan W.J."/>
            <person name="Pavesi G."/>
            <person name="Pesole G."/>
            <person name="Petrovsky N."/>
            <person name="Piazza S."/>
            <person name="Reed J."/>
            <person name="Reid J.F."/>
            <person name="Ring B.Z."/>
            <person name="Ringwald M."/>
            <person name="Rost B."/>
            <person name="Ruan Y."/>
            <person name="Salzberg S.L."/>
            <person name="Sandelin A."/>
            <person name="Schneider C."/>
            <person name="Schoenbach C."/>
            <person name="Sekiguchi K."/>
            <person name="Semple C.A."/>
            <person name="Seno S."/>
            <person name="Sessa L."/>
            <person name="Sheng Y."/>
            <person name="Shibata Y."/>
            <person name="Shimada H."/>
            <person name="Shimada K."/>
            <person name="Silva D."/>
            <person name="Sinclair B."/>
            <person name="Sperling S."/>
            <person name="Stupka E."/>
            <person name="Sugiura K."/>
            <person name="Sultana R."/>
            <person name="Takenaka Y."/>
            <person name="Taki K."/>
            <person name="Tammoja K."/>
            <person name="Tan S.L."/>
            <person name="Tang S."/>
            <person name="Taylor M.S."/>
            <person name="Tegner J."/>
            <person name="Teichmann S.A."/>
            <person name="Ueda H.R."/>
            <person name="van Nimwegen E."/>
            <person name="Verardo R."/>
            <person name="Wei C.L."/>
            <person name="Yagi K."/>
            <person name="Yamanishi H."/>
            <person name="Zabarovsky E."/>
            <person name="Zhu S."/>
            <person name="Zimmer A."/>
            <person name="Hide W."/>
            <person name="Bult C."/>
            <person name="Grimmond S.M."/>
            <person name="Teasdale R.D."/>
            <person name="Liu E.T."/>
            <person name="Brusic V."/>
            <person name="Quackenbush J."/>
            <person name="Wahlestedt C."/>
            <person name="Mattick J.S."/>
            <person name="Hume D.A."/>
            <person name="Kai C."/>
            <person name="Sasaki D."/>
            <person name="Tomaru Y."/>
            <person name="Fukuda S."/>
            <person name="Kanamori-Katayama M."/>
            <person name="Suzuki M."/>
            <person name="Aoki J."/>
            <person name="Arakawa T."/>
            <person name="Iida J."/>
            <person name="Imamura K."/>
            <person name="Itoh M."/>
            <person name="Kato T."/>
            <person name="Kawaji H."/>
            <person name="Kawagashira N."/>
            <person name="Kawashima T."/>
            <person name="Kojima M."/>
            <person name="Kondo S."/>
            <person name="Konno H."/>
            <person name="Nakano K."/>
            <person name="Ninomiya N."/>
            <person name="Nishio T."/>
            <person name="Okada M."/>
            <person name="Plessy C."/>
            <person name="Shibata K."/>
            <person name="Shiraki T."/>
            <person name="Suzuki S."/>
            <person name="Tagami M."/>
            <person name="Waki K."/>
            <person name="Watahiki A."/>
            <person name="Okamura-Oho Y."/>
            <person name="Suzuki H."/>
            <person name="Kawai J."/>
            <person name="Hayashizaki Y."/>
        </authorList>
    </citation>
    <scope>NUCLEOTIDE SEQUENCE [LARGE SCALE MRNA] OF 168-343</scope>
    <source>
        <strain>C57BL/6J</strain>
        <tissue>Hippocampus</tissue>
    </source>
</reference>
<reference key="3">
    <citation type="journal article" date="2010" name="Cell">
        <title>A tissue-specific atlas of mouse protein phosphorylation and expression.</title>
        <authorList>
            <person name="Huttlin E.L."/>
            <person name="Jedrychowski M.P."/>
            <person name="Elias J.E."/>
            <person name="Goswami T."/>
            <person name="Rad R."/>
            <person name="Beausoleil S.A."/>
            <person name="Villen J."/>
            <person name="Haas W."/>
            <person name="Sowa M.E."/>
            <person name="Gygi S.P."/>
        </authorList>
    </citation>
    <scope>IDENTIFICATION BY MASS SPECTROMETRY [LARGE SCALE ANALYSIS]</scope>
    <source>
        <tissue>Brain</tissue>
    </source>
</reference>
<comment type="function">
    <text evidence="1">May function as 2-oxoglutarate-dependent dioxygenase.</text>
</comment>
<comment type="cofactor">
    <cofactor evidence="1">
        <name>Fe cation</name>
        <dbReference type="ChEBI" id="CHEBI:24875"/>
    </cofactor>
</comment>
<comment type="subcellular location">
    <subcellularLocation>
        <location evidence="3">Membrane</location>
        <topology evidence="3">Single-pass type II membrane protein</topology>
    </subcellularLocation>
</comment>
<comment type="similarity">
    <text evidence="3">Belongs to the aspartyl/asparaginyl beta-hydroxylase family.</text>
</comment>
<gene>
    <name type="primary">Asphd2</name>
</gene>
<dbReference type="EC" id="1.14.11.-"/>
<dbReference type="EMBL" id="BC046606">
    <property type="protein sequence ID" value="AAH46606.1"/>
    <property type="molecule type" value="mRNA"/>
</dbReference>
<dbReference type="EMBL" id="AK013495">
    <property type="protein sequence ID" value="BAB28881.1"/>
    <property type="molecule type" value="mRNA"/>
</dbReference>
<dbReference type="CCDS" id="CCDS19542.1"/>
<dbReference type="RefSeq" id="NP_001343940.1">
    <property type="nucleotide sequence ID" value="NM_001357011.1"/>
</dbReference>
<dbReference type="RefSeq" id="NP_001343941.1">
    <property type="nucleotide sequence ID" value="NM_001357012.1"/>
</dbReference>
<dbReference type="RefSeq" id="NP_001343942.1">
    <property type="nucleotide sequence ID" value="NM_001357013.1"/>
</dbReference>
<dbReference type="RefSeq" id="NP_001343943.1">
    <property type="nucleotide sequence ID" value="NM_001357014.1"/>
</dbReference>
<dbReference type="RefSeq" id="NP_001343944.1">
    <property type="nucleotide sequence ID" value="NM_001357015.1"/>
</dbReference>
<dbReference type="RefSeq" id="NP_082662.1">
    <property type="nucleotide sequence ID" value="NM_028386.2"/>
</dbReference>
<dbReference type="RefSeq" id="XP_011247871.1">
    <property type="nucleotide sequence ID" value="XM_011249569.2"/>
</dbReference>
<dbReference type="RefSeq" id="XP_011247872.1">
    <property type="nucleotide sequence ID" value="XM_011249570.1"/>
</dbReference>
<dbReference type="RefSeq" id="XP_011247873.1">
    <property type="nucleotide sequence ID" value="XM_011249571.2"/>
</dbReference>
<dbReference type="RefSeq" id="XP_011247874.1">
    <property type="nucleotide sequence ID" value="XM_011249572.4"/>
</dbReference>
<dbReference type="RefSeq" id="XP_011247875.1">
    <property type="nucleotide sequence ID" value="XM_011249573.1"/>
</dbReference>
<dbReference type="RefSeq" id="XP_011247876.1">
    <property type="nucleotide sequence ID" value="XM_011249574.2"/>
</dbReference>
<dbReference type="RefSeq" id="XP_011247877.1">
    <property type="nucleotide sequence ID" value="XM_011249575.1"/>
</dbReference>
<dbReference type="RefSeq" id="XP_011247878.1">
    <property type="nucleotide sequence ID" value="XM_011249576.1"/>
</dbReference>
<dbReference type="RefSeq" id="XP_017176606.1">
    <property type="nucleotide sequence ID" value="XM_017321117.1"/>
</dbReference>
<dbReference type="RefSeq" id="XP_017176607.1">
    <property type="nucleotide sequence ID" value="XM_017321118.3"/>
</dbReference>
<dbReference type="RefSeq" id="XP_030110699.1">
    <property type="nucleotide sequence ID" value="XM_030254839.2"/>
</dbReference>
<dbReference type="RefSeq" id="XP_030110700.1">
    <property type="nucleotide sequence ID" value="XM_030254840.2"/>
</dbReference>
<dbReference type="RefSeq" id="XP_030110701.1">
    <property type="nucleotide sequence ID" value="XM_030254841.1"/>
</dbReference>
<dbReference type="RefSeq" id="XP_030110702.1">
    <property type="nucleotide sequence ID" value="XM_030254842.2"/>
</dbReference>
<dbReference type="RefSeq" id="XP_036021431.1">
    <property type="nucleotide sequence ID" value="XM_036165538.1"/>
</dbReference>
<dbReference type="RefSeq" id="XP_036021433.1">
    <property type="nucleotide sequence ID" value="XM_036165540.1"/>
</dbReference>
<dbReference type="RefSeq" id="XP_036021434.1">
    <property type="nucleotide sequence ID" value="XM_036165541.1"/>
</dbReference>
<dbReference type="SMR" id="Q80VP9"/>
<dbReference type="FunCoup" id="Q80VP9">
    <property type="interactions" value="621"/>
</dbReference>
<dbReference type="STRING" id="10090.ENSMUSP00000031291"/>
<dbReference type="GlyCosmos" id="Q80VP9">
    <property type="glycosylation" value="2 sites, No reported glycans"/>
</dbReference>
<dbReference type="GlyGen" id="Q80VP9">
    <property type="glycosylation" value="2 sites"/>
</dbReference>
<dbReference type="PhosphoSitePlus" id="Q80VP9"/>
<dbReference type="SwissPalm" id="Q80VP9"/>
<dbReference type="PaxDb" id="10090-ENSMUSP00000031291"/>
<dbReference type="PeptideAtlas" id="Q80VP9"/>
<dbReference type="ProteomicsDB" id="281851"/>
<dbReference type="Antibodypedia" id="212">
    <property type="antibodies" value="102 antibodies from 17 providers"/>
</dbReference>
<dbReference type="DNASU" id="72898"/>
<dbReference type="Ensembl" id="ENSMUST00000031291.9">
    <property type="protein sequence ID" value="ENSMUSP00000031291.8"/>
    <property type="gene ID" value="ENSMUSG00000029348.12"/>
</dbReference>
<dbReference type="GeneID" id="72898"/>
<dbReference type="KEGG" id="mmu:72898"/>
<dbReference type="UCSC" id="uc008yth.2">
    <property type="organism name" value="mouse"/>
</dbReference>
<dbReference type="AGR" id="MGI:1920148"/>
<dbReference type="CTD" id="57168"/>
<dbReference type="MGI" id="MGI:1920148">
    <property type="gene designation" value="Asphd2"/>
</dbReference>
<dbReference type="VEuPathDB" id="HostDB:ENSMUSG00000029348"/>
<dbReference type="eggNOG" id="KOG3696">
    <property type="taxonomic scope" value="Eukaryota"/>
</dbReference>
<dbReference type="GeneTree" id="ENSGT00940000159252"/>
<dbReference type="HOGENOM" id="CLU_059279_3_0_1"/>
<dbReference type="InParanoid" id="Q80VP9"/>
<dbReference type="OMA" id="HIPSKDC"/>
<dbReference type="OrthoDB" id="438431at2759"/>
<dbReference type="PhylomeDB" id="Q80VP9"/>
<dbReference type="TreeFam" id="TF312799"/>
<dbReference type="BioGRID-ORCS" id="72898">
    <property type="hits" value="1 hit in 76 CRISPR screens"/>
</dbReference>
<dbReference type="ChiTaRS" id="Asphd2">
    <property type="organism name" value="mouse"/>
</dbReference>
<dbReference type="PRO" id="PR:Q80VP9"/>
<dbReference type="Proteomes" id="UP000000589">
    <property type="component" value="Chromosome 5"/>
</dbReference>
<dbReference type="RNAct" id="Q80VP9">
    <property type="molecule type" value="protein"/>
</dbReference>
<dbReference type="Bgee" id="ENSMUSG00000029348">
    <property type="expression patterns" value="Expressed in dentate gyrus of hippocampal formation granule cell and 149 other cell types or tissues"/>
</dbReference>
<dbReference type="ExpressionAtlas" id="Q80VP9">
    <property type="expression patterns" value="baseline and differential"/>
</dbReference>
<dbReference type="GO" id="GO:0016020">
    <property type="term" value="C:membrane"/>
    <property type="evidence" value="ECO:0007669"/>
    <property type="project" value="UniProtKB-SubCell"/>
</dbReference>
<dbReference type="GO" id="GO:0051213">
    <property type="term" value="F:dioxygenase activity"/>
    <property type="evidence" value="ECO:0007669"/>
    <property type="project" value="UniProtKB-KW"/>
</dbReference>
<dbReference type="GO" id="GO:0046872">
    <property type="term" value="F:metal ion binding"/>
    <property type="evidence" value="ECO:0007669"/>
    <property type="project" value="UniProtKB-KW"/>
</dbReference>
<dbReference type="FunFam" id="2.60.120.330:FF:000011">
    <property type="entry name" value="Aspartate beta-hydroxylase domain-containing protein 2"/>
    <property type="match status" value="1"/>
</dbReference>
<dbReference type="Gene3D" id="2.60.120.330">
    <property type="entry name" value="B-lactam Antibiotic, Isopenicillin N Synthase, Chain"/>
    <property type="match status" value="1"/>
</dbReference>
<dbReference type="InterPro" id="IPR007803">
    <property type="entry name" value="Asp/Arg/Pro-Hydrxlase"/>
</dbReference>
<dbReference type="InterPro" id="IPR051821">
    <property type="entry name" value="Asp/Asn_beta-hydroxylase"/>
</dbReference>
<dbReference type="InterPro" id="IPR027443">
    <property type="entry name" value="IPNS-like_sf"/>
</dbReference>
<dbReference type="PANTHER" id="PTHR46332">
    <property type="entry name" value="ASPARTATE BETA-HYDROXYLASE DOMAIN-CONTAINING PROTEIN 2"/>
    <property type="match status" value="1"/>
</dbReference>
<dbReference type="PANTHER" id="PTHR46332:SF3">
    <property type="entry name" value="ASPARTATE BETA-HYDROXYLASE DOMAIN-CONTAINING PROTEIN 2"/>
    <property type="match status" value="1"/>
</dbReference>
<dbReference type="Pfam" id="PF05118">
    <property type="entry name" value="Asp_Arg_Hydrox"/>
    <property type="match status" value="1"/>
</dbReference>
<dbReference type="SUPFAM" id="SSF51197">
    <property type="entry name" value="Clavaminate synthase-like"/>
    <property type="match status" value="1"/>
</dbReference>
<name>ASPH2_MOUSE</name>
<sequence length="343" mass="38731">MWLEWLVAWSWSLDGLRDCIATGIQSVRDCDGTAVITVACLLILFVWYCYHVGREQPRPHVSVNSLLQGVDANGLQNGSMYCQSPECARCTHHEGLNQKLYHNLQEYAKRYSWSGMGRIHKGIREQGRYLSSQPSIQKPEVFFLPDLPTTPYFSRDAQKHDVELLERNFQAILCEFETLYKAFSNCSLPQGWKVNSTPSGEWFTFDFVSQGVCVPRNCRKCPRTYRLLGSLRTCIGNNVFGNACISVLSPGTVITEHYGPTNIRIRCHLGLKTPNGCELVVGGEPQCWAEGRCLLFDDSFLHTAFHEGSAEDGPRVVFMVDLWHPNVAAAERQALDFIFAPGR</sequence>
<feature type="chain" id="PRO_0000254163" description="Aspartate beta-hydroxylase domain-containing protein 2">
    <location>
        <begin position="1"/>
        <end position="343"/>
    </location>
</feature>
<feature type="topological domain" description="Cytoplasmic" evidence="2">
    <location>
        <begin position="1"/>
        <end position="31"/>
    </location>
</feature>
<feature type="transmembrane region" description="Helical" evidence="2">
    <location>
        <begin position="32"/>
        <end position="52"/>
    </location>
</feature>
<feature type="topological domain" description="Lumenal" evidence="2">
    <location>
        <begin position="53"/>
        <end position="343"/>
    </location>
</feature>
<feature type="binding site" evidence="1">
    <location>
        <position position="202"/>
    </location>
    <ligand>
        <name>2-oxoglutarate</name>
        <dbReference type="ChEBI" id="CHEBI:16810"/>
    </ligand>
</feature>
<feature type="binding site" evidence="1">
    <location>
        <position position="246"/>
    </location>
    <ligand>
        <name>2-oxoglutarate</name>
        <dbReference type="ChEBI" id="CHEBI:16810"/>
    </ligand>
</feature>
<feature type="binding site" evidence="1">
    <location>
        <position position="257"/>
    </location>
    <ligand>
        <name>Fe cation</name>
        <dbReference type="ChEBI" id="CHEBI:24875"/>
    </ligand>
</feature>
<feature type="binding site" evidence="1">
    <location>
        <begin position="266"/>
        <end position="268"/>
    </location>
    <ligand>
        <name>2-oxoglutarate</name>
        <dbReference type="ChEBI" id="CHEBI:16810"/>
    </ligand>
</feature>
<feature type="binding site" evidence="1">
    <location>
        <position position="302"/>
    </location>
    <ligand>
        <name>Fe cation</name>
        <dbReference type="ChEBI" id="CHEBI:24875"/>
    </ligand>
</feature>
<feature type="binding site" evidence="1">
    <location>
        <position position="315"/>
    </location>
    <ligand>
        <name>2-oxoglutarate</name>
        <dbReference type="ChEBI" id="CHEBI:16810"/>
    </ligand>
</feature>
<feature type="glycosylation site" description="N-linked (GlcNAc...) asparagine" evidence="2">
    <location>
        <position position="77"/>
    </location>
</feature>
<feature type="glycosylation site" description="N-linked (GlcNAc...) asparagine" evidence="2">
    <location>
        <position position="185"/>
    </location>
</feature>
<proteinExistence type="evidence at protein level"/>
<accession>Q80VP9</accession>
<accession>Q9CUZ2</accession>
<evidence type="ECO:0000250" key="1"/>
<evidence type="ECO:0000255" key="2"/>
<evidence type="ECO:0000305" key="3"/>
<organism>
    <name type="scientific">Mus musculus</name>
    <name type="common">Mouse</name>
    <dbReference type="NCBI Taxonomy" id="10090"/>
    <lineage>
        <taxon>Eukaryota</taxon>
        <taxon>Metazoa</taxon>
        <taxon>Chordata</taxon>
        <taxon>Craniata</taxon>
        <taxon>Vertebrata</taxon>
        <taxon>Euteleostomi</taxon>
        <taxon>Mammalia</taxon>
        <taxon>Eutheria</taxon>
        <taxon>Euarchontoglires</taxon>
        <taxon>Glires</taxon>
        <taxon>Rodentia</taxon>
        <taxon>Myomorpha</taxon>
        <taxon>Muroidea</taxon>
        <taxon>Muridae</taxon>
        <taxon>Murinae</taxon>
        <taxon>Mus</taxon>
        <taxon>Mus</taxon>
    </lineage>
</organism>
<protein>
    <recommendedName>
        <fullName>Aspartate beta-hydroxylase domain-containing protein 2</fullName>
        <ecNumber>1.14.11.-</ecNumber>
    </recommendedName>
</protein>